<accession>B0K4I3</accession>
<evidence type="ECO:0000255" key="1">
    <source>
        <dbReference type="HAMAP-Rule" id="MF_00418"/>
    </source>
</evidence>
<evidence type="ECO:0000305" key="2"/>
<comment type="function">
    <text evidence="1">Catalyzes the condensation of (S)-aspartate-beta-semialdehyde [(S)-ASA] and pyruvate to 4-hydroxy-tetrahydrodipicolinate (HTPA).</text>
</comment>
<comment type="catalytic activity">
    <reaction evidence="1">
        <text>L-aspartate 4-semialdehyde + pyruvate = (2S,4S)-4-hydroxy-2,3,4,5-tetrahydrodipicolinate + H2O + H(+)</text>
        <dbReference type="Rhea" id="RHEA:34171"/>
        <dbReference type="ChEBI" id="CHEBI:15361"/>
        <dbReference type="ChEBI" id="CHEBI:15377"/>
        <dbReference type="ChEBI" id="CHEBI:15378"/>
        <dbReference type="ChEBI" id="CHEBI:67139"/>
        <dbReference type="ChEBI" id="CHEBI:537519"/>
        <dbReference type="EC" id="4.3.3.7"/>
    </reaction>
</comment>
<comment type="pathway">
    <text evidence="1">Amino-acid biosynthesis; L-lysine biosynthesis via DAP pathway; (S)-tetrahydrodipicolinate from L-aspartate: step 3/4.</text>
</comment>
<comment type="subunit">
    <text evidence="1">Homotetramer; dimer of dimers.</text>
</comment>
<comment type="subcellular location">
    <subcellularLocation>
        <location evidence="1">Cytoplasm</location>
    </subcellularLocation>
</comment>
<comment type="similarity">
    <text evidence="1">Belongs to the DapA family.</text>
</comment>
<comment type="caution">
    <text evidence="2">Was originally thought to be a dihydrodipicolinate synthase (DHDPS), catalyzing the condensation of (S)-aspartate-beta-semialdehyde [(S)-ASA] and pyruvate to dihydrodipicolinate (DHDP). However, it was shown in E.coli that the product of the enzymatic reaction is not dihydrodipicolinate but in fact (4S)-4-hydroxy-2,3,4,5-tetrahydro-(2S)-dipicolinic acid (HTPA), and that the consecutive dehydration reaction leading to DHDP is not spontaneous but catalyzed by DapB.</text>
</comment>
<organism>
    <name type="scientific">Thermoanaerobacter sp. (strain X514)</name>
    <dbReference type="NCBI Taxonomy" id="399726"/>
    <lineage>
        <taxon>Bacteria</taxon>
        <taxon>Bacillati</taxon>
        <taxon>Bacillota</taxon>
        <taxon>Clostridia</taxon>
        <taxon>Thermoanaerobacterales</taxon>
        <taxon>Thermoanaerobacteraceae</taxon>
        <taxon>Thermoanaerobacter</taxon>
    </lineage>
</organism>
<keyword id="KW-0028">Amino-acid biosynthesis</keyword>
<keyword id="KW-0963">Cytoplasm</keyword>
<keyword id="KW-0220">Diaminopimelate biosynthesis</keyword>
<keyword id="KW-0456">Lyase</keyword>
<keyword id="KW-0457">Lysine biosynthesis</keyword>
<keyword id="KW-0704">Schiff base</keyword>
<protein>
    <recommendedName>
        <fullName evidence="1">4-hydroxy-tetrahydrodipicolinate synthase</fullName>
        <shortName evidence="1">HTPA synthase</shortName>
        <ecNumber evidence="1">4.3.3.7</ecNumber>
    </recommendedName>
</protein>
<sequence>MPVFKGSGVAIVTPFNEEGVNFEKLGELIEWHIKEGTDAIIICGTTGEASTMTQEEQQQAIKFTVEKVAGRIPVIAGTGSNNTAHAVEMSEYAQSAGADALLVITPYYNKTTQKGLVAHFTEIARHVDIPIIIYNVPSRTSLNMLPETYLELSKHVDNVVGVKEASGDIVQVAEIARIMGKSFEIYSGNDDQVIPIMSLGGLGVISVTANIIPAKIHEMTTAYLNGDIEKARDMQLELNPLNKALFIETNPIPVKTAMNLMGFNVGPLRLPLVEMSDKNLEYLKSVLSKYGLLKEAN</sequence>
<dbReference type="EC" id="4.3.3.7" evidence="1"/>
<dbReference type="EMBL" id="CP000923">
    <property type="protein sequence ID" value="ABY93456.1"/>
    <property type="molecule type" value="Genomic_DNA"/>
</dbReference>
<dbReference type="RefSeq" id="WP_003866978.1">
    <property type="nucleotide sequence ID" value="NC_010320.1"/>
</dbReference>
<dbReference type="SMR" id="B0K4I3"/>
<dbReference type="KEGG" id="tex:Teth514_2184"/>
<dbReference type="HOGENOM" id="CLU_049343_7_1_9"/>
<dbReference type="UniPathway" id="UPA00034">
    <property type="reaction ID" value="UER00017"/>
</dbReference>
<dbReference type="Proteomes" id="UP000002155">
    <property type="component" value="Chromosome"/>
</dbReference>
<dbReference type="GO" id="GO:0005829">
    <property type="term" value="C:cytosol"/>
    <property type="evidence" value="ECO:0007669"/>
    <property type="project" value="TreeGrafter"/>
</dbReference>
<dbReference type="GO" id="GO:0008840">
    <property type="term" value="F:4-hydroxy-tetrahydrodipicolinate synthase activity"/>
    <property type="evidence" value="ECO:0007669"/>
    <property type="project" value="UniProtKB-UniRule"/>
</dbReference>
<dbReference type="GO" id="GO:0019877">
    <property type="term" value="P:diaminopimelate biosynthetic process"/>
    <property type="evidence" value="ECO:0007669"/>
    <property type="project" value="UniProtKB-UniRule"/>
</dbReference>
<dbReference type="GO" id="GO:0009089">
    <property type="term" value="P:lysine biosynthetic process via diaminopimelate"/>
    <property type="evidence" value="ECO:0007669"/>
    <property type="project" value="UniProtKB-UniRule"/>
</dbReference>
<dbReference type="CDD" id="cd00950">
    <property type="entry name" value="DHDPS"/>
    <property type="match status" value="1"/>
</dbReference>
<dbReference type="Gene3D" id="3.20.20.70">
    <property type="entry name" value="Aldolase class I"/>
    <property type="match status" value="1"/>
</dbReference>
<dbReference type="HAMAP" id="MF_00418">
    <property type="entry name" value="DapA"/>
    <property type="match status" value="1"/>
</dbReference>
<dbReference type="InterPro" id="IPR013785">
    <property type="entry name" value="Aldolase_TIM"/>
</dbReference>
<dbReference type="InterPro" id="IPR005263">
    <property type="entry name" value="DapA"/>
</dbReference>
<dbReference type="InterPro" id="IPR002220">
    <property type="entry name" value="DapA-like"/>
</dbReference>
<dbReference type="InterPro" id="IPR020625">
    <property type="entry name" value="Schiff_base-form_aldolases_AS"/>
</dbReference>
<dbReference type="InterPro" id="IPR020624">
    <property type="entry name" value="Schiff_base-form_aldolases_CS"/>
</dbReference>
<dbReference type="NCBIfam" id="TIGR00674">
    <property type="entry name" value="dapA"/>
    <property type="match status" value="1"/>
</dbReference>
<dbReference type="PANTHER" id="PTHR12128:SF66">
    <property type="entry name" value="4-HYDROXY-2-OXOGLUTARATE ALDOLASE, MITOCHONDRIAL"/>
    <property type="match status" value="1"/>
</dbReference>
<dbReference type="PANTHER" id="PTHR12128">
    <property type="entry name" value="DIHYDRODIPICOLINATE SYNTHASE"/>
    <property type="match status" value="1"/>
</dbReference>
<dbReference type="Pfam" id="PF00701">
    <property type="entry name" value="DHDPS"/>
    <property type="match status" value="1"/>
</dbReference>
<dbReference type="PIRSF" id="PIRSF001365">
    <property type="entry name" value="DHDPS"/>
    <property type="match status" value="1"/>
</dbReference>
<dbReference type="PRINTS" id="PR00146">
    <property type="entry name" value="DHPICSNTHASE"/>
</dbReference>
<dbReference type="SMART" id="SM01130">
    <property type="entry name" value="DHDPS"/>
    <property type="match status" value="1"/>
</dbReference>
<dbReference type="SUPFAM" id="SSF51569">
    <property type="entry name" value="Aldolase"/>
    <property type="match status" value="1"/>
</dbReference>
<dbReference type="PROSITE" id="PS00665">
    <property type="entry name" value="DHDPS_1"/>
    <property type="match status" value="1"/>
</dbReference>
<dbReference type="PROSITE" id="PS00666">
    <property type="entry name" value="DHDPS_2"/>
    <property type="match status" value="1"/>
</dbReference>
<reference key="1">
    <citation type="submission" date="2008-01" db="EMBL/GenBank/DDBJ databases">
        <title>Complete sequence of Thermoanaerobacter sp. X514.</title>
        <authorList>
            <consortium name="US DOE Joint Genome Institute"/>
            <person name="Copeland A."/>
            <person name="Lucas S."/>
            <person name="Lapidus A."/>
            <person name="Barry K."/>
            <person name="Glavina del Rio T."/>
            <person name="Dalin E."/>
            <person name="Tice H."/>
            <person name="Pitluck S."/>
            <person name="Bruce D."/>
            <person name="Goodwin L."/>
            <person name="Saunders E."/>
            <person name="Brettin T."/>
            <person name="Detter J.C."/>
            <person name="Han C."/>
            <person name="Schmutz J."/>
            <person name="Larimer F."/>
            <person name="Land M."/>
            <person name="Hauser L."/>
            <person name="Kyrpides N."/>
            <person name="Kim E."/>
            <person name="Hemme C."/>
            <person name="Fields M.W."/>
            <person name="He Z."/>
            <person name="Zhou J."/>
            <person name="Richardson P."/>
        </authorList>
    </citation>
    <scope>NUCLEOTIDE SEQUENCE [LARGE SCALE GENOMIC DNA]</scope>
    <source>
        <strain>X514</strain>
    </source>
</reference>
<proteinExistence type="inferred from homology"/>
<feature type="chain" id="PRO_1000124076" description="4-hydroxy-tetrahydrodipicolinate synthase">
    <location>
        <begin position="1"/>
        <end position="297"/>
    </location>
</feature>
<feature type="active site" description="Proton donor/acceptor" evidence="1">
    <location>
        <position position="134"/>
    </location>
</feature>
<feature type="active site" description="Schiff-base intermediate with substrate" evidence="1">
    <location>
        <position position="163"/>
    </location>
</feature>
<feature type="binding site" evidence="1">
    <location>
        <position position="46"/>
    </location>
    <ligand>
        <name>pyruvate</name>
        <dbReference type="ChEBI" id="CHEBI:15361"/>
    </ligand>
</feature>
<feature type="binding site" evidence="1">
    <location>
        <position position="205"/>
    </location>
    <ligand>
        <name>pyruvate</name>
        <dbReference type="ChEBI" id="CHEBI:15361"/>
    </ligand>
</feature>
<feature type="site" description="Part of a proton relay during catalysis" evidence="1">
    <location>
        <position position="45"/>
    </location>
</feature>
<feature type="site" description="Part of a proton relay during catalysis" evidence="1">
    <location>
        <position position="108"/>
    </location>
</feature>
<name>DAPA_THEPX</name>
<gene>
    <name evidence="1" type="primary">dapA</name>
    <name type="ordered locus">Teth514_2184</name>
</gene>